<feature type="chain" id="PRO_0000224427" description="Valine--tRNA ligase">
    <location>
        <begin position="1"/>
        <end position="947"/>
    </location>
</feature>
<feature type="coiled-coil region" evidence="1">
    <location>
        <begin position="879"/>
        <end position="943"/>
    </location>
</feature>
<feature type="short sequence motif" description="'HIGH' region">
    <location>
        <begin position="45"/>
        <end position="55"/>
    </location>
</feature>
<feature type="short sequence motif" description="'KMSKS' region">
    <location>
        <begin position="591"/>
        <end position="595"/>
    </location>
</feature>
<feature type="binding site" evidence="1">
    <location>
        <position position="594"/>
    </location>
    <ligand>
        <name>ATP</name>
        <dbReference type="ChEBI" id="CHEBI:30616"/>
    </ligand>
</feature>
<reference key="1">
    <citation type="journal article" date="2001" name="Science">
        <title>The genome of the natural genetic engineer Agrobacterium tumefaciens C58.</title>
        <authorList>
            <person name="Wood D.W."/>
            <person name="Setubal J.C."/>
            <person name="Kaul R."/>
            <person name="Monks D.E."/>
            <person name="Kitajima J.P."/>
            <person name="Okura V.K."/>
            <person name="Zhou Y."/>
            <person name="Chen L."/>
            <person name="Wood G.E."/>
            <person name="Almeida N.F. Jr."/>
            <person name="Woo L."/>
            <person name="Chen Y."/>
            <person name="Paulsen I.T."/>
            <person name="Eisen J.A."/>
            <person name="Karp P.D."/>
            <person name="Bovee D. Sr."/>
            <person name="Chapman P."/>
            <person name="Clendenning J."/>
            <person name="Deatherage G."/>
            <person name="Gillet W."/>
            <person name="Grant C."/>
            <person name="Kutyavin T."/>
            <person name="Levy R."/>
            <person name="Li M.-J."/>
            <person name="McClelland E."/>
            <person name="Palmieri A."/>
            <person name="Raymond C."/>
            <person name="Rouse G."/>
            <person name="Saenphimmachak C."/>
            <person name="Wu Z."/>
            <person name="Romero P."/>
            <person name="Gordon D."/>
            <person name="Zhang S."/>
            <person name="Yoo H."/>
            <person name="Tao Y."/>
            <person name="Biddle P."/>
            <person name="Jung M."/>
            <person name="Krespan W."/>
            <person name="Perry M."/>
            <person name="Gordon-Kamm B."/>
            <person name="Liao L."/>
            <person name="Kim S."/>
            <person name="Hendrick C."/>
            <person name="Zhao Z.-Y."/>
            <person name="Dolan M."/>
            <person name="Chumley F."/>
            <person name="Tingey S.V."/>
            <person name="Tomb J.-F."/>
            <person name="Gordon M.P."/>
            <person name="Olson M.V."/>
            <person name="Nester E.W."/>
        </authorList>
    </citation>
    <scope>NUCLEOTIDE SEQUENCE [LARGE SCALE GENOMIC DNA]</scope>
    <source>
        <strain>C58 / ATCC 33970</strain>
    </source>
</reference>
<reference key="2">
    <citation type="journal article" date="2001" name="Science">
        <title>Genome sequence of the plant pathogen and biotechnology agent Agrobacterium tumefaciens C58.</title>
        <authorList>
            <person name="Goodner B."/>
            <person name="Hinkle G."/>
            <person name="Gattung S."/>
            <person name="Miller N."/>
            <person name="Blanchard M."/>
            <person name="Qurollo B."/>
            <person name="Goldman B.S."/>
            <person name="Cao Y."/>
            <person name="Askenazi M."/>
            <person name="Halling C."/>
            <person name="Mullin L."/>
            <person name="Houmiel K."/>
            <person name="Gordon J."/>
            <person name="Vaudin M."/>
            <person name="Iartchouk O."/>
            <person name="Epp A."/>
            <person name="Liu F."/>
            <person name="Wollam C."/>
            <person name="Allinger M."/>
            <person name="Doughty D."/>
            <person name="Scott C."/>
            <person name="Lappas C."/>
            <person name="Markelz B."/>
            <person name="Flanagan C."/>
            <person name="Crowell C."/>
            <person name="Gurson J."/>
            <person name="Lomo C."/>
            <person name="Sear C."/>
            <person name="Strub G."/>
            <person name="Cielo C."/>
            <person name="Slater S."/>
        </authorList>
    </citation>
    <scope>NUCLEOTIDE SEQUENCE [LARGE SCALE GENOMIC DNA]</scope>
    <source>
        <strain>C58 / ATCC 33970</strain>
    </source>
</reference>
<keyword id="KW-0030">Aminoacyl-tRNA synthetase</keyword>
<keyword id="KW-0067">ATP-binding</keyword>
<keyword id="KW-0175">Coiled coil</keyword>
<keyword id="KW-0963">Cytoplasm</keyword>
<keyword id="KW-0436">Ligase</keyword>
<keyword id="KW-0547">Nucleotide-binding</keyword>
<keyword id="KW-0648">Protein biosynthesis</keyword>
<keyword id="KW-1185">Reference proteome</keyword>
<sequence length="947" mass="106674">MLEKTYDSASVEPKIAKAWDEANAFRAGANAKPGAETFTIVIPPPNVTGSLHMGHALNNTLQDILVRFERMRGKDVLWQPGMDHAGIATQMVVERKLMENQLPGRREMGREAFVEKVWEWKAESGGLIFNQLKRLGASCDWSRERFTMDEGLSEAVLEVFVTLYKQNLIYKAKRLVNWDPKLQTAISDMEVEQIEVKGNLWHFRYPLEKGVTYEYPVAFDADGTPTEFETRDYIVVATTRPETMLGDTGVAVNPEDERYKGIVGKHVILPIVGRKIPIVADDYADPTAGTGAVKITPAHDFNDFEVGKRCGLRAINVMNIDGTISIKENEDFLEGLSHPAALHGAWDRLEGQDRFTARKIIVEIFEEAGLLDKIEPHKHVVPHGDRGGVPIEPRLTDQWWVDNKTLAQPAIASVREGRTNFVPKNWENTYFQWMENIQPWCISRQLWWGHQIPAWYGPDGQVFVEKTEEEALQAAIQHYIAHEGPWKAWVEEKLENFAPGEILTRDEDVLDTWFSSALWPFSTLGWPEQTPELARYYPTNVLVTGFDIIPFWVVRMMQMGLHFMKDDAGNPVEPFSTVYIHALVRDKNGQKMSKSKGNVIDPLELIDEYGADALRFTLAIMAAQGRDVKLDPARIAGYRNFGTKLWNATRFAEMNGVKRDPHFLAETASLTINRWILTELANTARDVTAALENFRFNDASGILYRFVWNQFCDWYLELLKPVFSGEDEEAKRESQACAAYVLEEIYKLLHPFMPFMTEELWAHTAGEGEERDDLLCLTDWPEPEFRDDAAAAEINWLIDLVSGIRSARAEMNVPPGATASLVVVGANTSTEARLDRHAAAIRRLARADEIRGGDVAPKGSAQIIVGEATVCLPLGNLVDLAAEQARLEKAIGKVDAEMERIDKKLSNEKFVANADPEVVAAERERKAELDVQLASLRTALTRVSEAG</sequence>
<protein>
    <recommendedName>
        <fullName evidence="1">Valine--tRNA ligase</fullName>
        <ecNumber evidence="1">6.1.1.9</ecNumber>
    </recommendedName>
    <alternativeName>
        <fullName evidence="1">Valyl-tRNA synthetase</fullName>
        <shortName evidence="1">ValRS</shortName>
    </alternativeName>
</protein>
<organism>
    <name type="scientific">Agrobacterium fabrum (strain C58 / ATCC 33970)</name>
    <name type="common">Agrobacterium tumefaciens (strain C58)</name>
    <dbReference type="NCBI Taxonomy" id="176299"/>
    <lineage>
        <taxon>Bacteria</taxon>
        <taxon>Pseudomonadati</taxon>
        <taxon>Pseudomonadota</taxon>
        <taxon>Alphaproteobacteria</taxon>
        <taxon>Hyphomicrobiales</taxon>
        <taxon>Rhizobiaceae</taxon>
        <taxon>Rhizobium/Agrobacterium group</taxon>
        <taxon>Agrobacterium</taxon>
        <taxon>Agrobacterium tumefaciens complex</taxon>
    </lineage>
</organism>
<evidence type="ECO:0000255" key="1">
    <source>
        <dbReference type="HAMAP-Rule" id="MF_02004"/>
    </source>
</evidence>
<accession>Q8UEN6</accession>
<accession>Q7CYP1</accession>
<comment type="function">
    <text evidence="1">Catalyzes the attachment of valine to tRNA(Val). As ValRS can inadvertently accommodate and process structurally similar amino acids such as threonine, to avoid such errors, it has a 'posttransfer' editing activity that hydrolyzes mischarged Thr-tRNA(Val) in a tRNA-dependent manner.</text>
</comment>
<comment type="catalytic activity">
    <reaction evidence="1">
        <text>tRNA(Val) + L-valine + ATP = L-valyl-tRNA(Val) + AMP + diphosphate</text>
        <dbReference type="Rhea" id="RHEA:10704"/>
        <dbReference type="Rhea" id="RHEA-COMP:9672"/>
        <dbReference type="Rhea" id="RHEA-COMP:9708"/>
        <dbReference type="ChEBI" id="CHEBI:30616"/>
        <dbReference type="ChEBI" id="CHEBI:33019"/>
        <dbReference type="ChEBI" id="CHEBI:57762"/>
        <dbReference type="ChEBI" id="CHEBI:78442"/>
        <dbReference type="ChEBI" id="CHEBI:78537"/>
        <dbReference type="ChEBI" id="CHEBI:456215"/>
        <dbReference type="EC" id="6.1.1.9"/>
    </reaction>
</comment>
<comment type="subunit">
    <text evidence="1">Monomer.</text>
</comment>
<comment type="subcellular location">
    <subcellularLocation>
        <location evidence="1">Cytoplasm</location>
    </subcellularLocation>
</comment>
<comment type="domain">
    <text evidence="1">ValRS has two distinct active sites: one for aminoacylation and one for editing. The misactivated threonine is translocated from the active site to the editing site.</text>
</comment>
<comment type="domain">
    <text evidence="1">The C-terminal coiled-coil domain is crucial for aminoacylation activity.</text>
</comment>
<comment type="similarity">
    <text evidence="1">Belongs to the class-I aminoacyl-tRNA synthetase family. ValS type 1 subfamily.</text>
</comment>
<proteinExistence type="inferred from homology"/>
<dbReference type="EC" id="6.1.1.9" evidence="1"/>
<dbReference type="EMBL" id="AE007869">
    <property type="protein sequence ID" value="AAK87491.1"/>
    <property type="molecule type" value="Genomic_DNA"/>
</dbReference>
<dbReference type="PIR" id="AI2787">
    <property type="entry name" value="AI2787"/>
</dbReference>
<dbReference type="PIR" id="B97567">
    <property type="entry name" value="B97567"/>
</dbReference>
<dbReference type="RefSeq" id="NP_354706.1">
    <property type="nucleotide sequence ID" value="NC_003062.2"/>
</dbReference>
<dbReference type="RefSeq" id="WP_006314374.1">
    <property type="nucleotide sequence ID" value="NC_003062.2"/>
</dbReference>
<dbReference type="SMR" id="Q8UEN6"/>
<dbReference type="STRING" id="176299.Atu1719"/>
<dbReference type="EnsemblBacteria" id="AAK87491">
    <property type="protein sequence ID" value="AAK87491"/>
    <property type="gene ID" value="Atu1719"/>
</dbReference>
<dbReference type="GeneID" id="1133757"/>
<dbReference type="KEGG" id="atu:Atu1719"/>
<dbReference type="PATRIC" id="fig|176299.10.peg.1732"/>
<dbReference type="eggNOG" id="COG0525">
    <property type="taxonomic scope" value="Bacteria"/>
</dbReference>
<dbReference type="HOGENOM" id="CLU_001493_0_2_5"/>
<dbReference type="OrthoDB" id="9810365at2"/>
<dbReference type="PhylomeDB" id="Q8UEN6"/>
<dbReference type="BioCyc" id="AGRO:ATU1719-MONOMER"/>
<dbReference type="Proteomes" id="UP000000813">
    <property type="component" value="Chromosome circular"/>
</dbReference>
<dbReference type="GO" id="GO:0005829">
    <property type="term" value="C:cytosol"/>
    <property type="evidence" value="ECO:0007669"/>
    <property type="project" value="TreeGrafter"/>
</dbReference>
<dbReference type="GO" id="GO:0002161">
    <property type="term" value="F:aminoacyl-tRNA deacylase activity"/>
    <property type="evidence" value="ECO:0007669"/>
    <property type="project" value="InterPro"/>
</dbReference>
<dbReference type="GO" id="GO:0005524">
    <property type="term" value="F:ATP binding"/>
    <property type="evidence" value="ECO:0007669"/>
    <property type="project" value="UniProtKB-UniRule"/>
</dbReference>
<dbReference type="GO" id="GO:0004832">
    <property type="term" value="F:valine-tRNA ligase activity"/>
    <property type="evidence" value="ECO:0007669"/>
    <property type="project" value="UniProtKB-UniRule"/>
</dbReference>
<dbReference type="GO" id="GO:0006438">
    <property type="term" value="P:valyl-tRNA aminoacylation"/>
    <property type="evidence" value="ECO:0007669"/>
    <property type="project" value="UniProtKB-UniRule"/>
</dbReference>
<dbReference type="CDD" id="cd07962">
    <property type="entry name" value="Anticodon_Ia_Val"/>
    <property type="match status" value="1"/>
</dbReference>
<dbReference type="CDD" id="cd00817">
    <property type="entry name" value="ValRS_core"/>
    <property type="match status" value="1"/>
</dbReference>
<dbReference type="FunFam" id="1.10.287.380:FF:000001">
    <property type="entry name" value="Valine--tRNA ligase"/>
    <property type="match status" value="1"/>
</dbReference>
<dbReference type="FunFam" id="3.40.50.620:FF:000032">
    <property type="entry name" value="Valine--tRNA ligase"/>
    <property type="match status" value="1"/>
</dbReference>
<dbReference type="Gene3D" id="3.40.50.620">
    <property type="entry name" value="HUPs"/>
    <property type="match status" value="2"/>
</dbReference>
<dbReference type="Gene3D" id="1.10.730.10">
    <property type="entry name" value="Isoleucyl-tRNA Synthetase, Domain 1"/>
    <property type="match status" value="1"/>
</dbReference>
<dbReference type="Gene3D" id="1.10.287.380">
    <property type="entry name" value="Valyl-tRNA synthetase, C-terminal domain"/>
    <property type="match status" value="1"/>
</dbReference>
<dbReference type="Gene3D" id="3.90.740.10">
    <property type="entry name" value="Valyl/Leucyl/Isoleucyl-tRNA synthetase, editing domain"/>
    <property type="match status" value="1"/>
</dbReference>
<dbReference type="HAMAP" id="MF_02004">
    <property type="entry name" value="Val_tRNA_synth_type1"/>
    <property type="match status" value="1"/>
</dbReference>
<dbReference type="InterPro" id="IPR001412">
    <property type="entry name" value="aa-tRNA-synth_I_CS"/>
</dbReference>
<dbReference type="InterPro" id="IPR002300">
    <property type="entry name" value="aa-tRNA-synth_Ia"/>
</dbReference>
<dbReference type="InterPro" id="IPR033705">
    <property type="entry name" value="Anticodon_Ia_Val"/>
</dbReference>
<dbReference type="InterPro" id="IPR013155">
    <property type="entry name" value="M/V/L/I-tRNA-synth_anticd-bd"/>
</dbReference>
<dbReference type="InterPro" id="IPR014729">
    <property type="entry name" value="Rossmann-like_a/b/a_fold"/>
</dbReference>
<dbReference type="InterPro" id="IPR010978">
    <property type="entry name" value="tRNA-bd_arm"/>
</dbReference>
<dbReference type="InterPro" id="IPR009080">
    <property type="entry name" value="tRNAsynth_Ia_anticodon-bd"/>
</dbReference>
<dbReference type="InterPro" id="IPR037118">
    <property type="entry name" value="Val-tRNA_synth_C_sf"/>
</dbReference>
<dbReference type="InterPro" id="IPR019499">
    <property type="entry name" value="Val-tRNA_synth_tRNA-bd"/>
</dbReference>
<dbReference type="InterPro" id="IPR009008">
    <property type="entry name" value="Val/Leu/Ile-tRNA-synth_edit"/>
</dbReference>
<dbReference type="InterPro" id="IPR002303">
    <property type="entry name" value="Valyl-tRNA_ligase"/>
</dbReference>
<dbReference type="NCBIfam" id="NF004349">
    <property type="entry name" value="PRK05729.1"/>
    <property type="match status" value="1"/>
</dbReference>
<dbReference type="NCBIfam" id="TIGR00422">
    <property type="entry name" value="valS"/>
    <property type="match status" value="1"/>
</dbReference>
<dbReference type="PANTHER" id="PTHR11946:SF93">
    <property type="entry name" value="VALINE--TRNA LIGASE, CHLOROPLASTIC_MITOCHONDRIAL 2"/>
    <property type="match status" value="1"/>
</dbReference>
<dbReference type="PANTHER" id="PTHR11946">
    <property type="entry name" value="VALYL-TRNA SYNTHETASES"/>
    <property type="match status" value="1"/>
</dbReference>
<dbReference type="Pfam" id="PF08264">
    <property type="entry name" value="Anticodon_1"/>
    <property type="match status" value="1"/>
</dbReference>
<dbReference type="Pfam" id="PF00133">
    <property type="entry name" value="tRNA-synt_1"/>
    <property type="match status" value="1"/>
</dbReference>
<dbReference type="Pfam" id="PF10458">
    <property type="entry name" value="Val_tRNA-synt_C"/>
    <property type="match status" value="1"/>
</dbReference>
<dbReference type="PRINTS" id="PR00986">
    <property type="entry name" value="TRNASYNTHVAL"/>
</dbReference>
<dbReference type="SUPFAM" id="SSF47323">
    <property type="entry name" value="Anticodon-binding domain of a subclass of class I aminoacyl-tRNA synthetases"/>
    <property type="match status" value="1"/>
</dbReference>
<dbReference type="SUPFAM" id="SSF52374">
    <property type="entry name" value="Nucleotidylyl transferase"/>
    <property type="match status" value="1"/>
</dbReference>
<dbReference type="SUPFAM" id="SSF46589">
    <property type="entry name" value="tRNA-binding arm"/>
    <property type="match status" value="1"/>
</dbReference>
<dbReference type="SUPFAM" id="SSF50677">
    <property type="entry name" value="ValRS/IleRS/LeuRS editing domain"/>
    <property type="match status" value="1"/>
</dbReference>
<dbReference type="PROSITE" id="PS00178">
    <property type="entry name" value="AA_TRNA_LIGASE_I"/>
    <property type="match status" value="1"/>
</dbReference>
<name>SYV_AGRFC</name>
<gene>
    <name evidence="1" type="primary">valS</name>
    <name type="ordered locus">Atu1719</name>
    <name type="ORF">AGR_C_3157</name>
</gene>